<comment type="subunit">
    <text evidence="4 5">Interacts with KRE6, LSB3, LSB5 and YSC84.</text>
</comment>
<comment type="interaction">
    <interactant intactId="EBI-10022">
        <id>Q12446</id>
    </interactant>
    <interactant intactId="EBI-2169">
        <id>P60010</id>
        <label>ACT1</label>
    </interactant>
    <organismsDiffer>false</organismsDiffer>
    <experiments>4</experiments>
</comment>
<comment type="interaction">
    <interactant intactId="EBI-10022">
        <id>Q12446</id>
    </interactant>
    <interactant intactId="EBI-2764">
        <id>Q05933</id>
        <label>ARC18</label>
    </interactant>
    <organismsDiffer>false</organismsDiffer>
    <experiments>3</experiments>
</comment>
<comment type="interaction">
    <interactant intactId="EBI-10022">
        <id>Q12446</id>
    </interactant>
    <interactant intactId="EBI-2777">
        <id>P38328</id>
        <label>ARC40</label>
    </interactant>
    <organismsDiffer>false</organismsDiffer>
    <experiments>3</experiments>
</comment>
<comment type="interaction">
    <interactant intactId="EBI-10022">
        <id>Q12446</id>
    </interactant>
    <interactant intactId="EBI-3889">
        <id>P38822</id>
        <label>BZZ1</label>
    </interactant>
    <organismsDiffer>false</organismsDiffer>
    <experiments>17</experiments>
</comment>
<comment type="interaction">
    <interactant intactId="EBI-10022">
        <id>Q12446</id>
    </interactant>
    <interactant intactId="EBI-6460">
        <id>P39013</id>
        <label>END3</label>
    </interactant>
    <organismsDiffer>false</organismsDiffer>
    <experiments>3</experiments>
</comment>
<comment type="interaction">
    <interactant intactId="EBI-10022">
        <id>Q12446</id>
    </interactant>
    <interactant intactId="EBI-5412">
        <id>Q05080</id>
        <label>HOF1</label>
    </interactant>
    <organismsDiffer>false</organismsDiffer>
    <experiments>3</experiments>
</comment>
<comment type="interaction">
    <interactant intactId="EBI-10022">
        <id>Q12446</id>
    </interactant>
    <interactant intactId="EBI-22980">
        <id>P43603</id>
        <label>LSB3</label>
    </interactant>
    <organismsDiffer>false</organismsDiffer>
    <experiments>8</experiments>
</comment>
<comment type="interaction">
    <interactant intactId="EBI-10022">
        <id>Q12446</id>
    </interactant>
    <interactant intactId="EBI-10218">
        <id>P25369</id>
        <label>LSB5</label>
    </interactant>
    <organismsDiffer>false</organismsDiffer>
    <experiments>3</experiments>
</comment>
<comment type="interaction">
    <interactant intactId="EBI-10022">
        <id>Q12446</id>
    </interactant>
    <interactant intactId="EBI-11670">
        <id>P36006</id>
        <label>MYO3</label>
    </interactant>
    <organismsDiffer>false</organismsDiffer>
    <experiments>3</experiments>
</comment>
<comment type="interaction">
    <interactant intactId="EBI-10022">
        <id>Q12446</id>
    </interactant>
    <interactant intactId="EBI-11687">
        <id>Q04439</id>
        <label>MYO5</label>
    </interactant>
    <organismsDiffer>false</organismsDiffer>
    <experiments>7</experiments>
</comment>
<comment type="interaction">
    <interactant intactId="EBI-10022">
        <id>Q12446</id>
    </interactant>
    <interactant intactId="EBI-13206">
        <id>P80667</id>
        <label>PEX13</label>
    </interactant>
    <organismsDiffer>false</organismsDiffer>
    <experiments>2</experiments>
</comment>
<comment type="interaction">
    <interactant intactId="EBI-10022">
        <id>Q12446</id>
    </interactant>
    <interactant intactId="EBI-35523">
        <id>Q06449</id>
        <label>PIN3</label>
    </interactant>
    <organismsDiffer>false</organismsDiffer>
    <experiments>4</experiments>
</comment>
<comment type="interaction">
    <interactant intactId="EBI-10022">
        <id>Q12446</id>
    </interactant>
    <interactant intactId="EBI-14500">
        <id>P39743</id>
        <label>RVS167</label>
    </interactant>
    <organismsDiffer>false</organismsDiffer>
    <experiments>14</experiments>
</comment>
<comment type="interaction">
    <interactant intactId="EBI-10022">
        <id>Q12446</id>
    </interactant>
    <interactant intactId="EBI-18140">
        <id>P40073</id>
        <label>SHO1</label>
    </interactant>
    <organismsDiffer>false</organismsDiffer>
    <experiments>5</experiments>
</comment>
<comment type="interaction">
    <interactant intactId="EBI-10022">
        <id>Q12446</id>
    </interactant>
    <interactant intactId="EBI-17313">
        <id>P32790</id>
        <label>SLA1</label>
    </interactant>
    <organismsDiffer>false</organismsDiffer>
    <experiments>8</experiments>
</comment>
<comment type="interaction">
    <interactant intactId="EBI-10022">
        <id>Q12446</id>
    </interactant>
    <interactant intactId="EBI-17323">
        <id>P33338</id>
        <label>SLA2</label>
    </interactant>
    <organismsDiffer>false</organismsDiffer>
    <experiments>3</experiments>
</comment>
<comment type="interaction">
    <interactant intactId="EBI-10022">
        <id>Q12446</id>
    </interactant>
    <interactant intactId="EBI-20502">
        <id>P37370</id>
        <label>VRP1</label>
    </interactant>
    <organismsDiffer>false</organismsDiffer>
    <experiments>7</experiments>
</comment>
<comment type="interaction">
    <interactant intactId="EBI-10022">
        <id>Q12446</id>
    </interactant>
    <interactant intactId="EBI-24460">
        <id>P32793</id>
        <label>YSC84</label>
    </interactant>
    <organismsDiffer>false</organismsDiffer>
    <experiments>7</experiments>
</comment>
<comment type="miscellaneous">
    <text evidence="6">Present with 8580 molecules/cell in log phase SD medium.</text>
</comment>
<organism>
    <name type="scientific">Saccharomyces cerevisiae (strain ATCC 204508 / S288c)</name>
    <name type="common">Baker's yeast</name>
    <dbReference type="NCBI Taxonomy" id="559292"/>
    <lineage>
        <taxon>Eukaryota</taxon>
        <taxon>Fungi</taxon>
        <taxon>Dikarya</taxon>
        <taxon>Ascomycota</taxon>
        <taxon>Saccharomycotina</taxon>
        <taxon>Saccharomycetes</taxon>
        <taxon>Saccharomycetales</taxon>
        <taxon>Saccharomycetaceae</taxon>
        <taxon>Saccharomyces</taxon>
    </lineage>
</organism>
<protein>
    <recommendedName>
        <fullName>Proline-rich protein LAS17</fullName>
    </recommendedName>
</protein>
<proteinExistence type="evidence at protein level"/>
<reference key="1">
    <citation type="submission" date="1995-12" db="EMBL/GenBank/DDBJ databases">
        <title>Yeast mutants sensitive to local anesthetics.</title>
        <authorList>
            <person name="Toh-e A."/>
        </authorList>
    </citation>
    <scope>NUCLEOTIDE SEQUENCE [GENOMIC DNA]</scope>
</reference>
<reference key="2">
    <citation type="journal article" date="1997" name="Nature">
        <title>The nucleotide sequence of Saccharomyces cerevisiae chromosome XV.</title>
        <authorList>
            <person name="Dujon B."/>
            <person name="Albermann K."/>
            <person name="Aldea M."/>
            <person name="Alexandraki D."/>
            <person name="Ansorge W."/>
            <person name="Arino J."/>
            <person name="Benes V."/>
            <person name="Bohn C."/>
            <person name="Bolotin-Fukuhara M."/>
            <person name="Bordonne R."/>
            <person name="Boyer J."/>
            <person name="Camasses A."/>
            <person name="Casamayor A."/>
            <person name="Casas C."/>
            <person name="Cheret G."/>
            <person name="Cziepluch C."/>
            <person name="Daignan-Fornier B."/>
            <person name="Dang V.-D."/>
            <person name="de Haan M."/>
            <person name="Delius H."/>
            <person name="Durand P."/>
            <person name="Fairhead C."/>
            <person name="Feldmann H."/>
            <person name="Gaillon L."/>
            <person name="Galisson F."/>
            <person name="Gamo F.-J."/>
            <person name="Gancedo C."/>
            <person name="Goffeau A."/>
            <person name="Goulding S.E."/>
            <person name="Grivell L.A."/>
            <person name="Habbig B."/>
            <person name="Hand N.J."/>
            <person name="Hani J."/>
            <person name="Hattenhorst U."/>
            <person name="Hebling U."/>
            <person name="Hernando Y."/>
            <person name="Herrero E."/>
            <person name="Heumann K."/>
            <person name="Hiesel R."/>
            <person name="Hilger F."/>
            <person name="Hofmann B."/>
            <person name="Hollenberg C.P."/>
            <person name="Hughes B."/>
            <person name="Jauniaux J.-C."/>
            <person name="Kalogeropoulos A."/>
            <person name="Katsoulou C."/>
            <person name="Kordes E."/>
            <person name="Lafuente M.J."/>
            <person name="Landt O."/>
            <person name="Louis E.J."/>
            <person name="Maarse A.C."/>
            <person name="Madania A."/>
            <person name="Mannhaupt G."/>
            <person name="Marck C."/>
            <person name="Martin R.P."/>
            <person name="Mewes H.-W."/>
            <person name="Michaux G."/>
            <person name="Paces V."/>
            <person name="Parle-McDermott A.G."/>
            <person name="Pearson B.M."/>
            <person name="Perrin A."/>
            <person name="Pettersson B."/>
            <person name="Poch O."/>
            <person name="Pohl T.M."/>
            <person name="Poirey R."/>
            <person name="Portetelle D."/>
            <person name="Pujol A."/>
            <person name="Purnelle B."/>
            <person name="Ramezani Rad M."/>
            <person name="Rechmann S."/>
            <person name="Schwager C."/>
            <person name="Schweizer M."/>
            <person name="Sor F."/>
            <person name="Sterky F."/>
            <person name="Tarassov I.A."/>
            <person name="Teodoru C."/>
            <person name="Tettelin H."/>
            <person name="Thierry A."/>
            <person name="Tobiasch E."/>
            <person name="Tzermia M."/>
            <person name="Uhlen M."/>
            <person name="Unseld M."/>
            <person name="Valens M."/>
            <person name="Vandenbol M."/>
            <person name="Vetter I."/>
            <person name="Vlcek C."/>
            <person name="Voet M."/>
            <person name="Volckaert G."/>
            <person name="Voss H."/>
            <person name="Wambutt R."/>
            <person name="Wedler H."/>
            <person name="Wiemann S."/>
            <person name="Winsor B."/>
            <person name="Wolfe K.H."/>
            <person name="Zollner A."/>
            <person name="Zumstein E."/>
            <person name="Kleine K."/>
        </authorList>
    </citation>
    <scope>NUCLEOTIDE SEQUENCE [LARGE SCALE GENOMIC DNA]</scope>
    <source>
        <strain>ATCC 204508 / S288c</strain>
    </source>
</reference>
<reference key="3">
    <citation type="journal article" date="2014" name="G3 (Bethesda)">
        <title>The reference genome sequence of Saccharomyces cerevisiae: Then and now.</title>
        <authorList>
            <person name="Engel S.R."/>
            <person name="Dietrich F.S."/>
            <person name="Fisk D.G."/>
            <person name="Binkley G."/>
            <person name="Balakrishnan R."/>
            <person name="Costanzo M.C."/>
            <person name="Dwight S.S."/>
            <person name="Hitz B.C."/>
            <person name="Karra K."/>
            <person name="Nash R.S."/>
            <person name="Weng S."/>
            <person name="Wong E.D."/>
            <person name="Lloyd P."/>
            <person name="Skrzypek M.S."/>
            <person name="Miyasato S.R."/>
            <person name="Simison M."/>
            <person name="Cherry J.M."/>
        </authorList>
    </citation>
    <scope>GENOME REANNOTATION</scope>
    <source>
        <strain>ATCC 204508 / S288c</strain>
    </source>
</reference>
<reference key="4">
    <citation type="journal article" date="1999" name="Mol. Biol. Cell">
        <title>The Saccharomyces cerevisiae homologue of human Wiskott-Aldrich syndrome protein Las17p interacts with the Arp2/3 complex.</title>
        <authorList>
            <person name="Madania A."/>
            <person name="Dumoulin P."/>
            <person name="Grava S."/>
            <person name="Kitamoto H."/>
            <person name="Scharer-Brodbeck C."/>
            <person name="Soulard A."/>
            <person name="Moreau V."/>
            <person name="Winsor B."/>
        </authorList>
    </citation>
    <scope>INTERACTION WITH LSB3; LSB5 AND YSC84</scope>
</reference>
<reference key="5">
    <citation type="journal article" date="2002" name="Yeast">
        <title>Actin patch assembly proteins Las17p and Sla1p restrict cell wall growth to daughter cells and interact with cis-Golgi protein Kre6p.</title>
        <authorList>
            <person name="Li H."/>
            <person name="Page N."/>
            <person name="Bussey H."/>
        </authorList>
    </citation>
    <scope>INTERACTION WITH KRE6</scope>
</reference>
<reference key="6">
    <citation type="journal article" date="2003" name="Nature">
        <title>Global analysis of protein expression in yeast.</title>
        <authorList>
            <person name="Ghaemmaghami S."/>
            <person name="Huh W.-K."/>
            <person name="Bower K."/>
            <person name="Howson R.W."/>
            <person name="Belle A."/>
            <person name="Dephoure N."/>
            <person name="O'Shea E.K."/>
            <person name="Weissman J.S."/>
        </authorList>
    </citation>
    <scope>LEVEL OF PROTEIN EXPRESSION [LARGE SCALE ANALYSIS]</scope>
</reference>
<reference key="7">
    <citation type="journal article" date="2008" name="Mol. Cell. Proteomics">
        <title>A multidimensional chromatography technology for in-depth phosphoproteome analysis.</title>
        <authorList>
            <person name="Albuquerque C.P."/>
            <person name="Smolka M.B."/>
            <person name="Payne S.H."/>
            <person name="Bafna V."/>
            <person name="Eng J."/>
            <person name="Zhou H."/>
        </authorList>
    </citation>
    <scope>PHOSPHORYLATION [LARGE SCALE ANALYSIS] AT SER-588</scope>
    <scope>IDENTIFICATION BY MASS SPECTROMETRY [LARGE SCALE ANALYSIS]</scope>
</reference>
<reference key="8">
    <citation type="journal article" date="2009" name="Science">
        <title>Global analysis of Cdk1 substrate phosphorylation sites provides insights into evolution.</title>
        <authorList>
            <person name="Holt L.J."/>
            <person name="Tuch B.B."/>
            <person name="Villen J."/>
            <person name="Johnson A.D."/>
            <person name="Gygi S.P."/>
            <person name="Morgan D.O."/>
        </authorList>
    </citation>
    <scope>PHOSPHORYLATION [LARGE SCALE ANALYSIS] AT THR-334 AND SER-337</scope>
    <scope>IDENTIFICATION BY MASS SPECTROMETRY [LARGE SCALE ANALYSIS]</scope>
</reference>
<keyword id="KW-0002">3D-structure</keyword>
<keyword id="KW-0597">Phosphoprotein</keyword>
<keyword id="KW-1185">Reference proteome</keyword>
<feature type="chain" id="PRO_0000084361" description="Proline-rich protein LAS17">
    <location>
        <begin position="1"/>
        <end position="633"/>
    </location>
</feature>
<feature type="domain" description="WH1" evidence="2">
    <location>
        <begin position="16"/>
        <end position="127"/>
    </location>
</feature>
<feature type="domain" description="WH2" evidence="1">
    <location>
        <begin position="547"/>
        <end position="567"/>
    </location>
</feature>
<feature type="region of interest" description="Disordered" evidence="3">
    <location>
        <begin position="145"/>
        <end position="545"/>
    </location>
</feature>
<feature type="region of interest" description="Disordered" evidence="3">
    <location>
        <begin position="563"/>
        <end position="606"/>
    </location>
</feature>
<feature type="compositionally biased region" description="Low complexity" evidence="3">
    <location>
        <begin position="192"/>
        <end position="215"/>
    </location>
</feature>
<feature type="compositionally biased region" description="Pro residues" evidence="3">
    <location>
        <begin position="216"/>
        <end position="225"/>
    </location>
</feature>
<feature type="compositionally biased region" description="Pro residues" evidence="3">
    <location>
        <begin position="238"/>
        <end position="256"/>
    </location>
</feature>
<feature type="compositionally biased region" description="Low complexity" evidence="3">
    <location>
        <begin position="257"/>
        <end position="269"/>
    </location>
</feature>
<feature type="compositionally biased region" description="Low complexity" evidence="3">
    <location>
        <begin position="307"/>
        <end position="322"/>
    </location>
</feature>
<feature type="compositionally biased region" description="Pro residues" evidence="3">
    <location>
        <begin position="342"/>
        <end position="357"/>
    </location>
</feature>
<feature type="compositionally biased region" description="Polar residues" evidence="3">
    <location>
        <begin position="363"/>
        <end position="376"/>
    </location>
</feature>
<feature type="compositionally biased region" description="Polar residues" evidence="3">
    <location>
        <begin position="399"/>
        <end position="414"/>
    </location>
</feature>
<feature type="compositionally biased region" description="Polar residues" evidence="3">
    <location>
        <begin position="454"/>
        <end position="465"/>
    </location>
</feature>
<feature type="compositionally biased region" description="Low complexity" evidence="3">
    <location>
        <begin position="479"/>
        <end position="488"/>
    </location>
</feature>
<feature type="modified residue" description="Phosphothreonine" evidence="8">
    <location>
        <position position="334"/>
    </location>
</feature>
<feature type="modified residue" description="Phosphoserine" evidence="8">
    <location>
        <position position="337"/>
    </location>
</feature>
<feature type="modified residue" description="Phosphoserine" evidence="7">
    <location>
        <position position="588"/>
    </location>
</feature>
<name>LAS17_YEAST</name>
<dbReference type="EMBL" id="D78487">
    <property type="protein sequence ID" value="BAA11386.1"/>
    <property type="molecule type" value="Genomic_DNA"/>
</dbReference>
<dbReference type="EMBL" id="Z75089">
    <property type="protein sequence ID" value="CAA99390.1"/>
    <property type="molecule type" value="Genomic_DNA"/>
</dbReference>
<dbReference type="EMBL" id="BK006948">
    <property type="protein sequence ID" value="DAA10953.1"/>
    <property type="molecule type" value="Genomic_DNA"/>
</dbReference>
<dbReference type="PIR" id="S62057">
    <property type="entry name" value="S62057"/>
</dbReference>
<dbReference type="RefSeq" id="NP_014824.1">
    <property type="nucleotide sequence ID" value="NM_001183600.1"/>
</dbReference>
<dbReference type="PDB" id="1ZUK">
    <property type="method" value="X-ray"/>
    <property type="resolution" value="1.90 A"/>
    <property type="chains" value="C=350-360"/>
</dbReference>
<dbReference type="PDBsum" id="1ZUK"/>
<dbReference type="SMR" id="Q12446"/>
<dbReference type="BioGRID" id="34576">
    <property type="interactions" value="750"/>
</dbReference>
<dbReference type="ComplexPortal" id="CPX-1344">
    <property type="entry name" value="SLAC complex"/>
</dbReference>
<dbReference type="DIP" id="DIP-963N"/>
<dbReference type="FunCoup" id="Q12446">
    <property type="interactions" value="282"/>
</dbReference>
<dbReference type="IntAct" id="Q12446">
    <property type="interactions" value="75"/>
</dbReference>
<dbReference type="MINT" id="Q12446"/>
<dbReference type="STRING" id="4932.YOR181W"/>
<dbReference type="GlyGen" id="Q12446">
    <property type="glycosylation" value="5 sites, 1 O-linked glycan (3 sites)"/>
</dbReference>
<dbReference type="iPTMnet" id="Q12446"/>
<dbReference type="PaxDb" id="4932-YOR181W"/>
<dbReference type="PeptideAtlas" id="Q12446"/>
<dbReference type="EnsemblFungi" id="YOR181W_mRNA">
    <property type="protein sequence ID" value="YOR181W"/>
    <property type="gene ID" value="YOR181W"/>
</dbReference>
<dbReference type="GeneID" id="854353"/>
<dbReference type="KEGG" id="sce:YOR181W"/>
<dbReference type="AGR" id="SGD:S000005707"/>
<dbReference type="SGD" id="S000005707">
    <property type="gene designation" value="LAS17"/>
</dbReference>
<dbReference type="VEuPathDB" id="FungiDB:YOR181W"/>
<dbReference type="eggNOG" id="KOG3671">
    <property type="taxonomic scope" value="Eukaryota"/>
</dbReference>
<dbReference type="GeneTree" id="ENSGT00940000176200"/>
<dbReference type="HOGENOM" id="CLU_015385_1_2_1"/>
<dbReference type="InParanoid" id="Q12446"/>
<dbReference type="OMA" id="EYNQDRK"/>
<dbReference type="OrthoDB" id="8963340at2759"/>
<dbReference type="BioCyc" id="YEAST:G3O-33692-MONOMER"/>
<dbReference type="BioGRID-ORCS" id="854353">
    <property type="hits" value="0 hits in 10 CRISPR screens"/>
</dbReference>
<dbReference type="CD-CODE" id="E019EF73">
    <property type="entry name" value="Ede1 condensate"/>
</dbReference>
<dbReference type="EvolutionaryTrace" id="Q12446"/>
<dbReference type="PRO" id="PR:Q12446"/>
<dbReference type="Proteomes" id="UP000002311">
    <property type="component" value="Chromosome XV"/>
</dbReference>
<dbReference type="RNAct" id="Q12446">
    <property type="molecule type" value="protein"/>
</dbReference>
<dbReference type="GO" id="GO:0030479">
    <property type="term" value="C:actin cortical patch"/>
    <property type="evidence" value="ECO:0000314"/>
    <property type="project" value="SGD"/>
</dbReference>
<dbReference type="GO" id="GO:0005737">
    <property type="term" value="C:cytoplasm"/>
    <property type="evidence" value="ECO:0000314"/>
    <property type="project" value="ComplexPortal"/>
</dbReference>
<dbReference type="GO" id="GO:0043332">
    <property type="term" value="C:mating projection tip"/>
    <property type="evidence" value="ECO:0007005"/>
    <property type="project" value="SGD"/>
</dbReference>
<dbReference type="GO" id="GO:0140224">
    <property type="term" value="C:SLAC complex"/>
    <property type="evidence" value="ECO:0000314"/>
    <property type="project" value="SGD"/>
</dbReference>
<dbReference type="GO" id="GO:0003779">
    <property type="term" value="F:actin binding"/>
    <property type="evidence" value="ECO:0000314"/>
    <property type="project" value="SGD"/>
</dbReference>
<dbReference type="GO" id="GO:0071933">
    <property type="term" value="F:Arp2/3 complex binding"/>
    <property type="evidence" value="ECO:0000314"/>
    <property type="project" value="SGD"/>
</dbReference>
<dbReference type="GO" id="GO:0031267">
    <property type="term" value="F:small GTPase binding"/>
    <property type="evidence" value="ECO:0000318"/>
    <property type="project" value="GO_Central"/>
</dbReference>
<dbReference type="GO" id="GO:0051666">
    <property type="term" value="P:actin cortical patch localization"/>
    <property type="evidence" value="ECO:0000315"/>
    <property type="project" value="SGD"/>
</dbReference>
<dbReference type="GO" id="GO:0007015">
    <property type="term" value="P:actin filament organization"/>
    <property type="evidence" value="ECO:0000314"/>
    <property type="project" value="SGD"/>
</dbReference>
<dbReference type="GO" id="GO:0030041">
    <property type="term" value="P:actin filament polymerization"/>
    <property type="evidence" value="ECO:0000315"/>
    <property type="project" value="SGD"/>
</dbReference>
<dbReference type="GO" id="GO:0045010">
    <property type="term" value="P:actin nucleation"/>
    <property type="evidence" value="ECO:0000314"/>
    <property type="project" value="SGD"/>
</dbReference>
<dbReference type="GO" id="GO:0032233">
    <property type="term" value="P:positive regulation of actin filament bundle assembly"/>
    <property type="evidence" value="ECO:0000314"/>
    <property type="project" value="SGD"/>
</dbReference>
<dbReference type="GO" id="GO:2000601">
    <property type="term" value="P:positive regulation of Arp2/3 complex-mediated actin nucleation"/>
    <property type="evidence" value="ECO:0000314"/>
    <property type="project" value="SGD"/>
</dbReference>
<dbReference type="GO" id="GO:0030833">
    <property type="term" value="P:regulation of actin filament polymerization"/>
    <property type="evidence" value="ECO:0000318"/>
    <property type="project" value="GO_Central"/>
</dbReference>
<dbReference type="GO" id="GO:0034315">
    <property type="term" value="P:regulation of Arp2/3 complex-mediated actin nucleation"/>
    <property type="evidence" value="ECO:0000314"/>
    <property type="project" value="ComplexPortal"/>
</dbReference>
<dbReference type="CDD" id="cd01205">
    <property type="entry name" value="EVH1_WASP-like"/>
    <property type="match status" value="1"/>
</dbReference>
<dbReference type="FunFam" id="2.30.29.30:FF:000281">
    <property type="entry name" value="Actin associated protein"/>
    <property type="match status" value="1"/>
</dbReference>
<dbReference type="Gene3D" id="2.30.29.30">
    <property type="entry name" value="Pleckstrin-homology domain (PH domain)/Phosphotyrosine-binding domain (PTB)"/>
    <property type="match status" value="1"/>
</dbReference>
<dbReference type="InterPro" id="IPR011993">
    <property type="entry name" value="PH-like_dom_sf"/>
</dbReference>
<dbReference type="InterPro" id="IPR033927">
    <property type="entry name" value="WASPfam_EVH1"/>
</dbReference>
<dbReference type="InterPro" id="IPR000697">
    <property type="entry name" value="WH1/EVH1_dom"/>
</dbReference>
<dbReference type="InterPro" id="IPR003124">
    <property type="entry name" value="WH2_dom"/>
</dbReference>
<dbReference type="Pfam" id="PF00568">
    <property type="entry name" value="WH1"/>
    <property type="match status" value="1"/>
</dbReference>
<dbReference type="Pfam" id="PF02205">
    <property type="entry name" value="WH2"/>
    <property type="match status" value="1"/>
</dbReference>
<dbReference type="SMART" id="SM00461">
    <property type="entry name" value="WH1"/>
    <property type="match status" value="1"/>
</dbReference>
<dbReference type="SUPFAM" id="SSF50729">
    <property type="entry name" value="PH domain-like"/>
    <property type="match status" value="1"/>
</dbReference>
<dbReference type="PROSITE" id="PS50229">
    <property type="entry name" value="WH1"/>
    <property type="match status" value="1"/>
</dbReference>
<dbReference type="PROSITE" id="PS51082">
    <property type="entry name" value="WH2"/>
    <property type="match status" value="1"/>
</dbReference>
<evidence type="ECO:0000255" key="1">
    <source>
        <dbReference type="PROSITE-ProRule" id="PRU00406"/>
    </source>
</evidence>
<evidence type="ECO:0000255" key="2">
    <source>
        <dbReference type="PROSITE-ProRule" id="PRU00410"/>
    </source>
</evidence>
<evidence type="ECO:0000256" key="3">
    <source>
        <dbReference type="SAM" id="MobiDB-lite"/>
    </source>
</evidence>
<evidence type="ECO:0000269" key="4">
    <source>
    </source>
</evidence>
<evidence type="ECO:0000269" key="5">
    <source>
    </source>
</evidence>
<evidence type="ECO:0000269" key="6">
    <source>
    </source>
</evidence>
<evidence type="ECO:0007744" key="7">
    <source>
    </source>
</evidence>
<evidence type="ECO:0007744" key="8">
    <source>
    </source>
</evidence>
<sequence length="633" mass="67572">MGLLNSSDKEIIKRALPKASNKIIDVTVARLYIAYPDKNEWQYTGLSGALALVDDLVGNTFFLKLVDINGHRGVIWDQELYVNFEYYQDRTFFHTFEMEECFAGLLFVDINEASHFLKRVQKRERYANRKTLLNKNAVALTKKVREEQKSQVVHGPRGESLIDNQRKRYNYEDVDTIPTTKHKAPPPPPPTAETFDSDQTSSFSDINSTTASAPTTPAPALPPASPEVRKEETHPKHSLPPLPNQFAPLPDPPQHNSPPQNNAPSQPQSNPFPFPIPEIPSTQSATNPFPFPVPQQQFNQAPSMGIPQQNRPLPQLPNRNNRPVPPPPPMRTTTEGSGVRLPAPPPPPRRGPAPPPPPHRHVTSNTLNSAGGNSLLPQATGRRGPAPPPPPRASRPTPNVTMQQNPQQYNNSNRPFGYQTNSNMSSPPPPPVTTFNTLTPQMTAATGQPAVPLPQNTQAPSQATNVPVAPPPPPASLGQSQIPQSAPSAPIPPTLPSTTSAAPPPPPAFLTQQPQSGGAPAPPPPPQMPATSTSGGGSFAETTGDAGRDALLASIRGAGGIGALRKVDKSQLDKPSVLLQEARGESASPPAAAGNGGTPGGPPASLADALAAALNKRKTKVGAHDDMDNGDDW</sequence>
<gene>
    <name type="primary">LAS17</name>
    <name type="ordered locus">YOR181W</name>
</gene>
<accession>Q12446</accession>
<accession>D6W2N7</accession>